<dbReference type="EC" id="3.4.11.9"/>
<dbReference type="EMBL" id="DS985216">
    <property type="protein sequence ID" value="EEY16429.1"/>
    <property type="molecule type" value="Genomic_DNA"/>
</dbReference>
<dbReference type="RefSeq" id="XP_003006399.1">
    <property type="nucleotide sequence ID" value="XM_003006353.1"/>
</dbReference>
<dbReference type="SMR" id="C9SDK8"/>
<dbReference type="STRING" id="526221.C9SDK8"/>
<dbReference type="GeneID" id="9535450"/>
<dbReference type="KEGG" id="val:VDBG_02538"/>
<dbReference type="eggNOG" id="KOG2737">
    <property type="taxonomic scope" value="Eukaryota"/>
</dbReference>
<dbReference type="HOGENOM" id="CLU_017266_1_2_1"/>
<dbReference type="OMA" id="ESKHINH"/>
<dbReference type="OrthoDB" id="10261878at2759"/>
<dbReference type="Proteomes" id="UP000008698">
    <property type="component" value="Unassembled WGS sequence"/>
</dbReference>
<dbReference type="GO" id="GO:0030145">
    <property type="term" value="F:manganese ion binding"/>
    <property type="evidence" value="ECO:0007669"/>
    <property type="project" value="InterPro"/>
</dbReference>
<dbReference type="GO" id="GO:0070006">
    <property type="term" value="F:metalloaminopeptidase activity"/>
    <property type="evidence" value="ECO:0007669"/>
    <property type="project" value="InterPro"/>
</dbReference>
<dbReference type="GO" id="GO:0006508">
    <property type="term" value="P:proteolysis"/>
    <property type="evidence" value="ECO:0007669"/>
    <property type="project" value="UniProtKB-KW"/>
</dbReference>
<dbReference type="CDD" id="cd01087">
    <property type="entry name" value="Prolidase"/>
    <property type="match status" value="1"/>
</dbReference>
<dbReference type="FunFam" id="3.90.230.10:FF:000002">
    <property type="entry name" value="Xaa-Pro aminopeptidase 3"/>
    <property type="match status" value="1"/>
</dbReference>
<dbReference type="Gene3D" id="3.90.230.10">
    <property type="entry name" value="Creatinase/methionine aminopeptidase superfamily"/>
    <property type="match status" value="1"/>
</dbReference>
<dbReference type="Gene3D" id="3.40.350.10">
    <property type="entry name" value="Creatinase/prolidase N-terminal domain"/>
    <property type="match status" value="1"/>
</dbReference>
<dbReference type="InterPro" id="IPR007865">
    <property type="entry name" value="Aminopep_P_N"/>
</dbReference>
<dbReference type="InterPro" id="IPR029149">
    <property type="entry name" value="Creatin/AminoP/Spt16_N"/>
</dbReference>
<dbReference type="InterPro" id="IPR036005">
    <property type="entry name" value="Creatinase/aminopeptidase-like"/>
</dbReference>
<dbReference type="InterPro" id="IPR000994">
    <property type="entry name" value="Pept_M24"/>
</dbReference>
<dbReference type="InterPro" id="IPR052433">
    <property type="entry name" value="X-Pro_dipept-like"/>
</dbReference>
<dbReference type="PANTHER" id="PTHR43226">
    <property type="entry name" value="XAA-PRO AMINOPEPTIDASE 3"/>
    <property type="match status" value="1"/>
</dbReference>
<dbReference type="PANTHER" id="PTHR43226:SF1">
    <property type="entry name" value="XAA-PRO DIPEPTIDASE"/>
    <property type="match status" value="1"/>
</dbReference>
<dbReference type="Pfam" id="PF05195">
    <property type="entry name" value="AMP_N"/>
    <property type="match status" value="1"/>
</dbReference>
<dbReference type="Pfam" id="PF00557">
    <property type="entry name" value="Peptidase_M24"/>
    <property type="match status" value="1"/>
</dbReference>
<dbReference type="SMART" id="SM01011">
    <property type="entry name" value="AMP_N"/>
    <property type="match status" value="1"/>
</dbReference>
<dbReference type="SUPFAM" id="SSF55920">
    <property type="entry name" value="Creatinase/aminopeptidase"/>
    <property type="match status" value="1"/>
</dbReference>
<dbReference type="SUPFAM" id="SSF53092">
    <property type="entry name" value="Creatinase/prolidase N-terminal domain"/>
    <property type="match status" value="1"/>
</dbReference>
<evidence type="ECO:0000250" key="1"/>
<evidence type="ECO:0000305" key="2"/>
<reference key="1">
    <citation type="journal article" date="2011" name="PLoS Pathog.">
        <title>Comparative genomics yields insights into niche adaptation of plant vascular wilt pathogens.</title>
        <authorList>
            <person name="Klosterman S.J."/>
            <person name="Subbarao K.V."/>
            <person name="Kang S."/>
            <person name="Veronese P."/>
            <person name="Gold S.E."/>
            <person name="Thomma B.P.H.J."/>
            <person name="Chen Z."/>
            <person name="Henrissat B."/>
            <person name="Lee Y.-H."/>
            <person name="Park J."/>
            <person name="Garcia-Pedrajas M.D."/>
            <person name="Barbara D.J."/>
            <person name="Anchieta A."/>
            <person name="de Jonge R."/>
            <person name="Santhanam P."/>
            <person name="Maruthachalam K."/>
            <person name="Atallah Z."/>
            <person name="Amyotte S.G."/>
            <person name="Paz Z."/>
            <person name="Inderbitzin P."/>
            <person name="Hayes R.J."/>
            <person name="Heiman D.I."/>
            <person name="Young S."/>
            <person name="Zeng Q."/>
            <person name="Engels R."/>
            <person name="Galagan J."/>
            <person name="Cuomo C.A."/>
            <person name="Dobinson K.F."/>
            <person name="Ma L.-J."/>
        </authorList>
    </citation>
    <scope>NUCLEOTIDE SEQUENCE [LARGE SCALE GENOMIC DNA]</scope>
    <source>
        <strain>VaMs.102 / ATCC MYA-4576 / FGSC 10136</strain>
    </source>
</reference>
<comment type="function">
    <text evidence="1">Catalyzes the removal of a penultimate prolyl residue from the N-termini of peptides.</text>
</comment>
<comment type="catalytic activity">
    <reaction>
        <text>Release of any N-terminal amino acid, including proline, that is linked to proline, even from a dipeptide or tripeptide.</text>
        <dbReference type="EC" id="3.4.11.9"/>
    </reaction>
</comment>
<comment type="cofactor">
    <cofactor evidence="1">
        <name>Mn(2+)</name>
        <dbReference type="ChEBI" id="CHEBI:29035"/>
    </cofactor>
    <text evidence="1">Binds 2 manganese ions per subunit.</text>
</comment>
<comment type="similarity">
    <text evidence="2">Belongs to the peptidase M24B family.</text>
</comment>
<proteinExistence type="inferred from homology"/>
<protein>
    <recommendedName>
        <fullName>Probable Xaa-Pro aminopeptidase VDBG_02538</fullName>
        <ecNumber>3.4.11.9</ecNumber>
    </recommendedName>
    <alternativeName>
        <fullName>Aminoacylproline aminopeptidase</fullName>
    </alternativeName>
    <alternativeName>
        <fullName>Prolidase</fullName>
    </alternativeName>
</protein>
<feature type="chain" id="PRO_0000411857" description="Probable Xaa-Pro aminopeptidase VDBG_02538">
    <location>
        <begin position="1"/>
        <end position="460"/>
    </location>
</feature>
<feature type="binding site" evidence="1">
    <location>
        <position position="256"/>
    </location>
    <ligand>
        <name>Mn(2+)</name>
        <dbReference type="ChEBI" id="CHEBI:29035"/>
        <label>2</label>
    </ligand>
</feature>
<feature type="binding site" evidence="1">
    <location>
        <position position="267"/>
    </location>
    <ligand>
        <name>Mn(2+)</name>
        <dbReference type="ChEBI" id="CHEBI:29035"/>
        <label>1</label>
    </ligand>
</feature>
<feature type="binding site" evidence="1">
    <location>
        <position position="267"/>
    </location>
    <ligand>
        <name>Mn(2+)</name>
        <dbReference type="ChEBI" id="CHEBI:29035"/>
        <label>2</label>
    </ligand>
</feature>
<feature type="binding site" evidence="1">
    <location>
        <position position="390"/>
    </location>
    <ligand>
        <name>Mn(2+)</name>
        <dbReference type="ChEBI" id="CHEBI:29035"/>
        <label>1</label>
    </ligand>
</feature>
<feature type="binding site" evidence="1">
    <location>
        <position position="430"/>
    </location>
    <ligand>
        <name>Mn(2+)</name>
        <dbReference type="ChEBI" id="CHEBI:29035"/>
        <label>1</label>
    </ligand>
</feature>
<feature type="binding site" evidence="1">
    <location>
        <position position="430"/>
    </location>
    <ligand>
        <name>Mn(2+)</name>
        <dbReference type="ChEBI" id="CHEBI:29035"/>
        <label>2</label>
    </ligand>
</feature>
<gene>
    <name type="ORF">VDBG_02538</name>
</gene>
<name>AMPP2_VERA1</name>
<sequence length="460" mass="51296">MSDYETILKGKYPAKDHAKRVADHIRSKVPGANGILYLEGRHTKLEEDSDHPEPFRQRRYFFYLTGCILADCHYIFDLKTSQSTLFIPPVDPEDVIWSGMPMTAEEAKEKYDIDNVLYTNEVNAELARLGKGSGSTAFAIANQVLDTVSFIGFEDKNFDVLKGAIEECRVVKDDYEVALTRKANAISTTAHHAVMKAVNTAKNEQELEAIFLERCFAHGAKNQAYHAIHAAGRAAATLHYVHNSAPLDGKLNVLLDGGAEWDCYASDITRTFPISGKFSKESRAIYDIVLKMQLESIKVLKEGILWDDVHELAHKIAIEGLLDLGILKGEADEILKARTSVAFFPHGLGHYLGMDTHDVGGTPNYADSDPMFRYLRKRGTLPAGSLVTVEPGIYFCSFIIEPYLKDPTHSKYIDTDVLDKYWDVGGVRIEDNLLITKTGSENLTPTIKEPEEIEKFVGSS</sequence>
<accession>C9SDK8</accession>
<organism>
    <name type="scientific">Verticillium alfalfae (strain VaMs.102 / ATCC MYA-4576 / FGSC 10136)</name>
    <name type="common">Verticillium wilt of alfalfa</name>
    <name type="synonym">Verticillium albo-atrum</name>
    <dbReference type="NCBI Taxonomy" id="526221"/>
    <lineage>
        <taxon>Eukaryota</taxon>
        <taxon>Fungi</taxon>
        <taxon>Dikarya</taxon>
        <taxon>Ascomycota</taxon>
        <taxon>Pezizomycotina</taxon>
        <taxon>Sordariomycetes</taxon>
        <taxon>Hypocreomycetidae</taxon>
        <taxon>Glomerellales</taxon>
        <taxon>Plectosphaerellaceae</taxon>
        <taxon>Verticillium</taxon>
    </lineage>
</organism>
<keyword id="KW-0031">Aminopeptidase</keyword>
<keyword id="KW-0378">Hydrolase</keyword>
<keyword id="KW-0464">Manganese</keyword>
<keyword id="KW-0479">Metal-binding</keyword>
<keyword id="KW-0482">Metalloprotease</keyword>
<keyword id="KW-0645">Protease</keyword>
<keyword id="KW-1185">Reference proteome</keyword>